<comment type="similarity">
    <text evidence="1">Belongs to the glycerate kinase type-1 family.</text>
</comment>
<comment type="sequence caution" evidence="1">
    <conflict type="erroneous initiation">
        <sequence resource="EMBL-CDS" id="SIU00836"/>
    </conflict>
    <text>Truncated N-terminus.</text>
</comment>
<dbReference type="EMBL" id="LT708304">
    <property type="protein sequence ID" value="SIU00836.1"/>
    <property type="status" value="ALT_INIT"/>
    <property type="molecule type" value="Genomic_DNA"/>
</dbReference>
<dbReference type="RefSeq" id="NP_855877.1">
    <property type="nucleotide sequence ID" value="NC_002945.3"/>
</dbReference>
<dbReference type="SMR" id="P64289"/>
<dbReference type="KEGG" id="mbo:BQ2027_MB2228C"/>
<dbReference type="PATRIC" id="fig|233413.5.peg.2444"/>
<dbReference type="Proteomes" id="UP000001419">
    <property type="component" value="Chromosome"/>
</dbReference>
<dbReference type="GO" id="GO:0008887">
    <property type="term" value="F:glycerate kinase activity"/>
    <property type="evidence" value="ECO:0007669"/>
    <property type="project" value="InterPro"/>
</dbReference>
<dbReference type="GO" id="GO:0031388">
    <property type="term" value="P:organic acid phosphorylation"/>
    <property type="evidence" value="ECO:0007669"/>
    <property type="project" value="InterPro"/>
</dbReference>
<dbReference type="FunFam" id="3.90.1510.10:FF:000002">
    <property type="entry name" value="Glycerate kinase"/>
    <property type="match status" value="1"/>
</dbReference>
<dbReference type="Gene3D" id="3.40.50.10350">
    <property type="entry name" value="Glycerate kinase, domain 1"/>
    <property type="match status" value="1"/>
</dbReference>
<dbReference type="Gene3D" id="3.90.1510.10">
    <property type="entry name" value="Glycerate kinase, domain 2"/>
    <property type="match status" value="1"/>
</dbReference>
<dbReference type="InterPro" id="IPR018193">
    <property type="entry name" value="Glyc_kinase_flavodox-like_fold"/>
</dbReference>
<dbReference type="InterPro" id="IPR004381">
    <property type="entry name" value="Glycerate_kinase"/>
</dbReference>
<dbReference type="InterPro" id="IPR018197">
    <property type="entry name" value="Glycerate_kinase_RE-like"/>
</dbReference>
<dbReference type="InterPro" id="IPR036129">
    <property type="entry name" value="Glycerate_kinase_sf"/>
</dbReference>
<dbReference type="PANTHER" id="PTHR21599">
    <property type="entry name" value="GLYCERATE KINASE"/>
    <property type="match status" value="1"/>
</dbReference>
<dbReference type="PANTHER" id="PTHR21599:SF0">
    <property type="entry name" value="GLYCERATE KINASE"/>
    <property type="match status" value="1"/>
</dbReference>
<dbReference type="Pfam" id="PF02595">
    <property type="entry name" value="Gly_kinase"/>
    <property type="match status" value="2"/>
</dbReference>
<dbReference type="PIRSF" id="PIRSF006078">
    <property type="entry name" value="GlxK"/>
    <property type="match status" value="1"/>
</dbReference>
<dbReference type="SUPFAM" id="SSF110738">
    <property type="entry name" value="Glycerate kinase I"/>
    <property type="match status" value="1"/>
</dbReference>
<proteinExistence type="inferred from homology"/>
<sequence length="381" mass="37832">MKGSQASDDATGSLGPGRLQLPAMRVLVAPDCYGDSLSAVEAAAAIATGWTRSRPGDSFIVAPQSDGGPGFVEVLGSRLGETRRLRVCGPLNTVVNAAWVFDPGSATAYLECAQACGLGLLGGPPTPETALAAHSKGVGQLIAAALRAGAARIVVGLGGSACTDGGKGMIAELGGLDAARRQLADVEVIAASDVEYPLLGPWGTARVFAPQKGADMATVAVLEGRLAAWAIELDAAAGRGVSAEPGAGAAGGIGAGLLAVGGRYQSGAAIIAEHTHFADDLADAELIVTGEGRFDEQSLHGKVVGAIAAAARPLAIPVIVLAGQVSLDKSALRSAGIMAALSIAEYAGSVRLALADAANQLMGLASQVAARLGNSGPSGYR</sequence>
<organism>
    <name type="scientific">Mycobacterium bovis (strain ATCC BAA-935 / AF2122/97)</name>
    <dbReference type="NCBI Taxonomy" id="233413"/>
    <lineage>
        <taxon>Bacteria</taxon>
        <taxon>Bacillati</taxon>
        <taxon>Actinomycetota</taxon>
        <taxon>Actinomycetes</taxon>
        <taxon>Mycobacteriales</taxon>
        <taxon>Mycobacteriaceae</taxon>
        <taxon>Mycobacterium</taxon>
        <taxon>Mycobacterium tuberculosis complex</taxon>
    </lineage>
</organism>
<keyword id="KW-0418">Kinase</keyword>
<keyword id="KW-1185">Reference proteome</keyword>
<keyword id="KW-0808">Transferase</keyword>
<feature type="chain" id="PRO_0000071540" description="Uncharacterized protein Mb2228c">
    <location>
        <begin position="1"/>
        <end position="381"/>
    </location>
</feature>
<reference key="1">
    <citation type="journal article" date="2003" name="Proc. Natl. Acad. Sci. U.S.A.">
        <title>The complete genome sequence of Mycobacterium bovis.</title>
        <authorList>
            <person name="Garnier T."/>
            <person name="Eiglmeier K."/>
            <person name="Camus J.-C."/>
            <person name="Medina N."/>
            <person name="Mansoor H."/>
            <person name="Pryor M."/>
            <person name="Duthoy S."/>
            <person name="Grondin S."/>
            <person name="Lacroix C."/>
            <person name="Monsempe C."/>
            <person name="Simon S."/>
            <person name="Harris B."/>
            <person name="Atkin R."/>
            <person name="Doggett J."/>
            <person name="Mayes R."/>
            <person name="Keating L."/>
            <person name="Wheeler P.R."/>
            <person name="Parkhill J."/>
            <person name="Barrell B.G."/>
            <person name="Cole S.T."/>
            <person name="Gordon S.V."/>
            <person name="Hewinson R.G."/>
        </authorList>
    </citation>
    <scope>NUCLEOTIDE SEQUENCE [LARGE SCALE GENOMIC DNA]</scope>
    <source>
        <strain>ATCC BAA-935 / AF2122/97</strain>
    </source>
</reference>
<reference key="2">
    <citation type="journal article" date="2017" name="Genome Announc.">
        <title>Updated reference genome sequence and annotation of Mycobacterium bovis AF2122/97.</title>
        <authorList>
            <person name="Malone K.M."/>
            <person name="Farrell D."/>
            <person name="Stuber T.P."/>
            <person name="Schubert O.T."/>
            <person name="Aebersold R."/>
            <person name="Robbe-Austerman S."/>
            <person name="Gordon S.V."/>
        </authorList>
    </citation>
    <scope>NUCLEOTIDE SEQUENCE [LARGE SCALE GENOMIC DNA]</scope>
    <scope>GENOME REANNOTATION</scope>
    <source>
        <strain>ATCC BAA-935 / AF2122/97</strain>
    </source>
</reference>
<protein>
    <recommendedName>
        <fullName>Uncharacterized protein Mb2228c</fullName>
    </recommendedName>
</protein>
<accession>P64289</accession>
<accession>A0A1R3Y0M3</accession>
<accession>Q10394</accession>
<accession>X2BJL5</accession>
<evidence type="ECO:0000305" key="1"/>
<gene>
    <name type="ordered locus">BQ2027_MB2228C</name>
</gene>
<name>Y2228_MYCBO</name>